<protein>
    <recommendedName>
        <fullName evidence="1">Small ribosomal subunit protein uS19</fullName>
    </recommendedName>
    <alternativeName>
        <fullName evidence="2">30S ribosomal protein S19</fullName>
    </alternativeName>
</protein>
<evidence type="ECO:0000255" key="1">
    <source>
        <dbReference type="HAMAP-Rule" id="MF_00531"/>
    </source>
</evidence>
<evidence type="ECO:0000305" key="2"/>
<reference key="1">
    <citation type="journal article" date="2005" name="Arch. Microbiol.">
        <title>The genome sequence of an anaerobic aromatic-degrading denitrifying bacterium, strain EbN1.</title>
        <authorList>
            <person name="Rabus R."/>
            <person name="Kube M."/>
            <person name="Heider J."/>
            <person name="Beck A."/>
            <person name="Heitmann K."/>
            <person name="Widdel F."/>
            <person name="Reinhardt R."/>
        </authorList>
    </citation>
    <scope>NUCLEOTIDE SEQUENCE [LARGE SCALE GENOMIC DNA]</scope>
    <source>
        <strain>DSM 19018 / LMG 30748 / EbN1</strain>
    </source>
</reference>
<organism>
    <name type="scientific">Aromatoleum aromaticum (strain DSM 19018 / LMG 30748 / EbN1)</name>
    <name type="common">Azoarcus sp. (strain EbN1)</name>
    <dbReference type="NCBI Taxonomy" id="76114"/>
    <lineage>
        <taxon>Bacteria</taxon>
        <taxon>Pseudomonadati</taxon>
        <taxon>Pseudomonadota</taxon>
        <taxon>Betaproteobacteria</taxon>
        <taxon>Rhodocyclales</taxon>
        <taxon>Rhodocyclaceae</taxon>
        <taxon>Aromatoleum</taxon>
    </lineage>
</organism>
<sequence>MARSIKKGPFVDAHLLKKVDAVRTSNDKRPIKTWSRRSTVLPDFVGLTIAVHNGRQHVPVFVSENMVGHKLGEFALTRTFKGHAASKKAKR</sequence>
<keyword id="KW-1185">Reference proteome</keyword>
<keyword id="KW-0687">Ribonucleoprotein</keyword>
<keyword id="KW-0689">Ribosomal protein</keyword>
<keyword id="KW-0694">RNA-binding</keyword>
<keyword id="KW-0699">rRNA-binding</keyword>
<accession>Q5P328</accession>
<gene>
    <name evidence="1" type="primary">rpsS</name>
    <name type="ordered locus">AZOSEA21610</name>
    <name type="ORF">ebB126</name>
</gene>
<comment type="function">
    <text evidence="1">Protein S19 forms a complex with S13 that binds strongly to the 16S ribosomal RNA.</text>
</comment>
<comment type="similarity">
    <text evidence="1">Belongs to the universal ribosomal protein uS19 family.</text>
</comment>
<feature type="chain" id="PRO_0000265326" description="Small ribosomal subunit protein uS19">
    <location>
        <begin position="1"/>
        <end position="91"/>
    </location>
</feature>
<dbReference type="EMBL" id="CR555306">
    <property type="protein sequence ID" value="CAI08286.1"/>
    <property type="molecule type" value="Genomic_DNA"/>
</dbReference>
<dbReference type="RefSeq" id="WP_011237976.1">
    <property type="nucleotide sequence ID" value="NC_006513.1"/>
</dbReference>
<dbReference type="SMR" id="Q5P328"/>
<dbReference type="STRING" id="76114.ebB126"/>
<dbReference type="KEGG" id="eba:ebB126"/>
<dbReference type="eggNOG" id="COG0185">
    <property type="taxonomic scope" value="Bacteria"/>
</dbReference>
<dbReference type="HOGENOM" id="CLU_144911_0_1_4"/>
<dbReference type="OrthoDB" id="9797833at2"/>
<dbReference type="Proteomes" id="UP000006552">
    <property type="component" value="Chromosome"/>
</dbReference>
<dbReference type="GO" id="GO:0005737">
    <property type="term" value="C:cytoplasm"/>
    <property type="evidence" value="ECO:0007669"/>
    <property type="project" value="UniProtKB-ARBA"/>
</dbReference>
<dbReference type="GO" id="GO:0015935">
    <property type="term" value="C:small ribosomal subunit"/>
    <property type="evidence" value="ECO:0007669"/>
    <property type="project" value="InterPro"/>
</dbReference>
<dbReference type="GO" id="GO:0019843">
    <property type="term" value="F:rRNA binding"/>
    <property type="evidence" value="ECO:0007669"/>
    <property type="project" value="UniProtKB-UniRule"/>
</dbReference>
<dbReference type="GO" id="GO:0003735">
    <property type="term" value="F:structural constituent of ribosome"/>
    <property type="evidence" value="ECO:0007669"/>
    <property type="project" value="InterPro"/>
</dbReference>
<dbReference type="GO" id="GO:0000028">
    <property type="term" value="P:ribosomal small subunit assembly"/>
    <property type="evidence" value="ECO:0007669"/>
    <property type="project" value="TreeGrafter"/>
</dbReference>
<dbReference type="GO" id="GO:0006412">
    <property type="term" value="P:translation"/>
    <property type="evidence" value="ECO:0007669"/>
    <property type="project" value="UniProtKB-UniRule"/>
</dbReference>
<dbReference type="FunFam" id="3.30.860.10:FF:000001">
    <property type="entry name" value="30S ribosomal protein S19"/>
    <property type="match status" value="1"/>
</dbReference>
<dbReference type="Gene3D" id="3.30.860.10">
    <property type="entry name" value="30s Ribosomal Protein S19, Chain A"/>
    <property type="match status" value="1"/>
</dbReference>
<dbReference type="HAMAP" id="MF_00531">
    <property type="entry name" value="Ribosomal_uS19"/>
    <property type="match status" value="1"/>
</dbReference>
<dbReference type="InterPro" id="IPR002222">
    <property type="entry name" value="Ribosomal_uS19"/>
</dbReference>
<dbReference type="InterPro" id="IPR005732">
    <property type="entry name" value="Ribosomal_uS19_bac-type"/>
</dbReference>
<dbReference type="InterPro" id="IPR020934">
    <property type="entry name" value="Ribosomal_uS19_CS"/>
</dbReference>
<dbReference type="InterPro" id="IPR023575">
    <property type="entry name" value="Ribosomal_uS19_SF"/>
</dbReference>
<dbReference type="NCBIfam" id="TIGR01050">
    <property type="entry name" value="rpsS_bact"/>
    <property type="match status" value="1"/>
</dbReference>
<dbReference type="PANTHER" id="PTHR11880">
    <property type="entry name" value="RIBOSOMAL PROTEIN S19P FAMILY MEMBER"/>
    <property type="match status" value="1"/>
</dbReference>
<dbReference type="PANTHER" id="PTHR11880:SF8">
    <property type="entry name" value="SMALL RIBOSOMAL SUBUNIT PROTEIN US19M"/>
    <property type="match status" value="1"/>
</dbReference>
<dbReference type="Pfam" id="PF00203">
    <property type="entry name" value="Ribosomal_S19"/>
    <property type="match status" value="1"/>
</dbReference>
<dbReference type="PIRSF" id="PIRSF002144">
    <property type="entry name" value="Ribosomal_S19"/>
    <property type="match status" value="1"/>
</dbReference>
<dbReference type="PRINTS" id="PR00975">
    <property type="entry name" value="RIBOSOMALS19"/>
</dbReference>
<dbReference type="SUPFAM" id="SSF54570">
    <property type="entry name" value="Ribosomal protein S19"/>
    <property type="match status" value="1"/>
</dbReference>
<dbReference type="PROSITE" id="PS00323">
    <property type="entry name" value="RIBOSOMAL_S19"/>
    <property type="match status" value="1"/>
</dbReference>
<name>RS19_AROAE</name>
<proteinExistence type="inferred from homology"/>